<sequence>MATEEKKPETEAARAQPTPSSSATQSKPTPVKPNYALKFTLAGHTKAVSSVKFSPNGEWLASSSADKLIKIWGAYDGKFEKTISGHKLGISDVAWSSDSNLLVSASDDKTLKIWDVSSGKCLKTLKGHSNYVFCCNFNPQSNLIVSGSFDESVRIWDVKTGKCLKTLPAHSDPVSAVHFNRDGSLIVSSSYDGLCRIWDTASGQCLKTLIDDDNPPVSFVKFSPNGKYILAATLDNTLKLWDYSKGKCLKTYTGHKNEKYCIFANFSVTGGKWIVSGSEDNLVYIWNLQTKEIVQKLQGHTDVVISTACHPTENIIASAALENDKTIKLWKSDC</sequence>
<protein>
    <recommendedName>
        <fullName>WD repeat-containing protein 5</fullName>
    </recommendedName>
    <alternativeName>
        <fullName>BMP2-induced 3-kb gene protein</fullName>
    </alternativeName>
    <alternativeName>
        <fullName>WD repeat-containing protein BIG-3</fullName>
    </alternativeName>
</protein>
<dbReference type="EMBL" id="AF416510">
    <property type="protein sequence ID" value="AAL27006.1"/>
    <property type="molecule type" value="mRNA"/>
</dbReference>
<dbReference type="EMBL" id="AK075937">
    <property type="protein sequence ID" value="BAC36067.1"/>
    <property type="molecule type" value="mRNA"/>
</dbReference>
<dbReference type="EMBL" id="BC008547">
    <property type="protein sequence ID" value="AAH08547.1"/>
    <property type="molecule type" value="mRNA"/>
</dbReference>
<dbReference type="EMBL" id="BC016103">
    <property type="protein sequence ID" value="AAH16103.1"/>
    <property type="molecule type" value="mRNA"/>
</dbReference>
<dbReference type="EMBL" id="BC025801">
    <property type="protein sequence ID" value="AAH25801.1"/>
    <property type="molecule type" value="mRNA"/>
</dbReference>
<dbReference type="CCDS" id="CCDS15829.1"/>
<dbReference type="RefSeq" id="NP_543124.1">
    <property type="nucleotide sequence ID" value="NM_080848.2"/>
</dbReference>
<dbReference type="RefSeq" id="XP_006497735.1">
    <property type="nucleotide sequence ID" value="XM_006497672.4"/>
</dbReference>
<dbReference type="PDB" id="2XL2">
    <property type="method" value="X-ray"/>
    <property type="resolution" value="2.40 A"/>
    <property type="chains" value="A/B=1-334"/>
</dbReference>
<dbReference type="PDB" id="2XL3">
    <property type="method" value="X-ray"/>
    <property type="resolution" value="2.70 A"/>
    <property type="chains" value="A/B=1-334"/>
</dbReference>
<dbReference type="PDB" id="8OK1">
    <property type="method" value="X-ray"/>
    <property type="resolution" value="1.38 A"/>
    <property type="chains" value="A=32-334"/>
</dbReference>
<dbReference type="PDB" id="8OKF">
    <property type="method" value="X-ray"/>
    <property type="resolution" value="1.85 A"/>
    <property type="chains" value="A=22-334"/>
</dbReference>
<dbReference type="PDBsum" id="2XL2"/>
<dbReference type="PDBsum" id="2XL3"/>
<dbReference type="PDBsum" id="8OK1"/>
<dbReference type="PDBsum" id="8OKF"/>
<dbReference type="SMR" id="P61965"/>
<dbReference type="BioGRID" id="228326">
    <property type="interactions" value="65"/>
</dbReference>
<dbReference type="ComplexPortal" id="CPX-1025">
    <property type="entry name" value="GCN5-containing ATAC complex"/>
</dbReference>
<dbReference type="ComplexPortal" id="CPX-1029">
    <property type="entry name" value="PCAF-containing ATAC complex"/>
</dbReference>
<dbReference type="ComplexPortal" id="CPX-875">
    <property type="entry name" value="NSL histone acetyltransferase complex"/>
</dbReference>
<dbReference type="CORUM" id="P61965"/>
<dbReference type="DIP" id="DIP-38618N"/>
<dbReference type="ELM" id="P61965"/>
<dbReference type="FunCoup" id="P61965">
    <property type="interactions" value="3279"/>
</dbReference>
<dbReference type="IntAct" id="P61965">
    <property type="interactions" value="47"/>
</dbReference>
<dbReference type="MINT" id="P61965"/>
<dbReference type="STRING" id="10090.ENSMUSP00000109585"/>
<dbReference type="GlyGen" id="P61965">
    <property type="glycosylation" value="1 site"/>
</dbReference>
<dbReference type="iPTMnet" id="P61965"/>
<dbReference type="PhosphoSitePlus" id="P61965"/>
<dbReference type="SwissPalm" id="P61965"/>
<dbReference type="jPOST" id="P61965"/>
<dbReference type="PaxDb" id="10090-ENSMUSP00000109585"/>
<dbReference type="PeptideAtlas" id="P61965"/>
<dbReference type="ProteomicsDB" id="299669"/>
<dbReference type="Pumba" id="P61965"/>
<dbReference type="Antibodypedia" id="31978">
    <property type="antibodies" value="455 antibodies from 42 providers"/>
</dbReference>
<dbReference type="DNASU" id="140858"/>
<dbReference type="Ensembl" id="ENSMUST00000113952.10">
    <property type="protein sequence ID" value="ENSMUSP00000109585.4"/>
    <property type="gene ID" value="ENSMUSG00000026917.16"/>
</dbReference>
<dbReference type="GeneID" id="140858"/>
<dbReference type="KEGG" id="mmu:140858"/>
<dbReference type="UCSC" id="uc012bsw.2">
    <property type="organism name" value="mouse"/>
</dbReference>
<dbReference type="AGR" id="MGI:2155884"/>
<dbReference type="CTD" id="11091"/>
<dbReference type="MGI" id="MGI:2155884">
    <property type="gene designation" value="Wdr5"/>
</dbReference>
<dbReference type="VEuPathDB" id="HostDB:ENSMUSG00000026917"/>
<dbReference type="eggNOG" id="KOG0266">
    <property type="taxonomic scope" value="Eukaryota"/>
</dbReference>
<dbReference type="GeneTree" id="ENSGT00940000154143"/>
<dbReference type="InParanoid" id="P61965"/>
<dbReference type="OMA" id="CKGHDTA"/>
<dbReference type="OrthoDB" id="674604at2759"/>
<dbReference type="PhylomeDB" id="P61965"/>
<dbReference type="TreeFam" id="TF314125"/>
<dbReference type="Reactome" id="R-MMU-3214841">
    <property type="pathway name" value="PKMTs methylate histone lysines"/>
</dbReference>
<dbReference type="Reactome" id="R-MMU-3214847">
    <property type="pathway name" value="HATs acetylate histones"/>
</dbReference>
<dbReference type="Reactome" id="R-MMU-3214858">
    <property type="pathway name" value="RMTs methylate histone arginines"/>
</dbReference>
<dbReference type="Reactome" id="R-MMU-8936459">
    <property type="pathway name" value="RUNX1 regulates genes involved in megakaryocyte differentiation and platelet function"/>
</dbReference>
<dbReference type="Reactome" id="R-MMU-8951664">
    <property type="pathway name" value="Neddylation"/>
</dbReference>
<dbReference type="Reactome" id="R-MMU-9772755">
    <property type="pathway name" value="Formation of WDR5-containing histone-modifying complexes"/>
</dbReference>
<dbReference type="Reactome" id="R-MMU-9818564">
    <property type="pathway name" value="Epigenetic regulation of gene expression by MLL3 and MLL4 complexes"/>
</dbReference>
<dbReference type="BioGRID-ORCS" id="140858">
    <property type="hits" value="28 hits in 77 CRISPR screens"/>
</dbReference>
<dbReference type="CD-CODE" id="5E82D60E">
    <property type="entry name" value="Nucleolus"/>
</dbReference>
<dbReference type="ChiTaRS" id="Wdr5">
    <property type="organism name" value="mouse"/>
</dbReference>
<dbReference type="EvolutionaryTrace" id="P61965"/>
<dbReference type="PRO" id="PR:P61965"/>
<dbReference type="Proteomes" id="UP000000589">
    <property type="component" value="Chromosome 2"/>
</dbReference>
<dbReference type="RNAct" id="P61965">
    <property type="molecule type" value="protein"/>
</dbReference>
<dbReference type="Bgee" id="ENSMUSG00000026917">
    <property type="expression patterns" value="Expressed in secondary oocyte and 253 other cell types or tissues"/>
</dbReference>
<dbReference type="ExpressionAtlas" id="P61965">
    <property type="expression patterns" value="baseline and differential"/>
</dbReference>
<dbReference type="GO" id="GO:0140672">
    <property type="term" value="C:ATAC complex"/>
    <property type="evidence" value="ECO:0000314"/>
    <property type="project" value="MGI"/>
</dbReference>
<dbReference type="GO" id="GO:0000123">
    <property type="term" value="C:histone acetyltransferase complex"/>
    <property type="evidence" value="ECO:0000250"/>
    <property type="project" value="UniProtKB"/>
</dbReference>
<dbReference type="GO" id="GO:0035097">
    <property type="term" value="C:histone methyltransferase complex"/>
    <property type="evidence" value="ECO:0000250"/>
    <property type="project" value="UniProtKB"/>
</dbReference>
<dbReference type="GO" id="GO:0072686">
    <property type="term" value="C:mitotic spindle"/>
    <property type="evidence" value="ECO:0000303"/>
    <property type="project" value="ComplexPortal"/>
</dbReference>
<dbReference type="GO" id="GO:0071339">
    <property type="term" value="C:MLL1 complex"/>
    <property type="evidence" value="ECO:0000250"/>
    <property type="project" value="UniProtKB"/>
</dbReference>
<dbReference type="GO" id="GO:0044666">
    <property type="term" value="C:MLL3/4 complex"/>
    <property type="evidence" value="ECO:0007669"/>
    <property type="project" value="Ensembl"/>
</dbReference>
<dbReference type="GO" id="GO:0044545">
    <property type="term" value="C:NSL complex"/>
    <property type="evidence" value="ECO:0000266"/>
    <property type="project" value="ComplexPortal"/>
</dbReference>
<dbReference type="GO" id="GO:0005654">
    <property type="term" value="C:nucleoplasm"/>
    <property type="evidence" value="ECO:0000304"/>
    <property type="project" value="Reactome"/>
</dbReference>
<dbReference type="GO" id="GO:0005634">
    <property type="term" value="C:nucleus"/>
    <property type="evidence" value="ECO:0000314"/>
    <property type="project" value="UniProtKB"/>
</dbReference>
<dbReference type="GO" id="GO:0048188">
    <property type="term" value="C:Set1C/COMPASS complex"/>
    <property type="evidence" value="ECO:0000250"/>
    <property type="project" value="UniProtKB"/>
</dbReference>
<dbReference type="GO" id="GO:0042800">
    <property type="term" value="F:histone H3K4 methyltransferase activity"/>
    <property type="evidence" value="ECO:0000315"/>
    <property type="project" value="MGI"/>
</dbReference>
<dbReference type="GO" id="GO:0140109">
    <property type="term" value="F:histone H3K4me1 reader activity"/>
    <property type="evidence" value="ECO:0000250"/>
    <property type="project" value="UniProtKB"/>
</dbReference>
<dbReference type="GO" id="GO:0140002">
    <property type="term" value="F:histone H3K4me3 reader activity"/>
    <property type="evidence" value="ECO:0007669"/>
    <property type="project" value="Ensembl"/>
</dbReference>
<dbReference type="GO" id="GO:0140004">
    <property type="term" value="F:histone H3Q5ser reader activity"/>
    <property type="evidence" value="ECO:0007669"/>
    <property type="project" value="Ensembl"/>
</dbReference>
<dbReference type="GO" id="GO:0006094">
    <property type="term" value="P:gluconeogenesis"/>
    <property type="evidence" value="ECO:0000316"/>
    <property type="project" value="MGI"/>
</dbReference>
<dbReference type="GO" id="GO:0000122">
    <property type="term" value="P:negative regulation of transcription by RNA polymerase II"/>
    <property type="evidence" value="ECO:0007669"/>
    <property type="project" value="Ensembl"/>
</dbReference>
<dbReference type="GO" id="GO:0045893">
    <property type="term" value="P:positive regulation of DNA-templated transcription"/>
    <property type="evidence" value="ECO:0000303"/>
    <property type="project" value="ComplexPortal"/>
</dbReference>
<dbReference type="GO" id="GO:0045722">
    <property type="term" value="P:positive regulation of gluconeogenesis"/>
    <property type="evidence" value="ECO:0000316"/>
    <property type="project" value="MGI"/>
</dbReference>
<dbReference type="GO" id="GO:0051726">
    <property type="term" value="P:regulation of cell cycle"/>
    <property type="evidence" value="ECO:0000315"/>
    <property type="project" value="ComplexPortal"/>
</dbReference>
<dbReference type="GO" id="GO:0051302">
    <property type="term" value="P:regulation of cell division"/>
    <property type="evidence" value="ECO:0000314"/>
    <property type="project" value="ComplexPortal"/>
</dbReference>
<dbReference type="GO" id="GO:0006355">
    <property type="term" value="P:regulation of DNA-templated transcription"/>
    <property type="evidence" value="ECO:0000266"/>
    <property type="project" value="ComplexPortal"/>
</dbReference>
<dbReference type="GO" id="GO:0045995">
    <property type="term" value="P:regulation of embryonic development"/>
    <property type="evidence" value="ECO:0000314"/>
    <property type="project" value="ComplexPortal"/>
</dbReference>
<dbReference type="GO" id="GO:0006357">
    <property type="term" value="P:regulation of transcription by RNA polymerase II"/>
    <property type="evidence" value="ECO:0000266"/>
    <property type="project" value="ComplexPortal"/>
</dbReference>
<dbReference type="GO" id="GO:0001501">
    <property type="term" value="P:skeletal system development"/>
    <property type="evidence" value="ECO:0000314"/>
    <property type="project" value="MGI"/>
</dbReference>
<dbReference type="GO" id="GO:0045815">
    <property type="term" value="P:transcription initiation-coupled chromatin remodeling"/>
    <property type="evidence" value="ECO:0000250"/>
    <property type="project" value="UniProtKB"/>
</dbReference>
<dbReference type="CDD" id="cd00200">
    <property type="entry name" value="WD40"/>
    <property type="match status" value="1"/>
</dbReference>
<dbReference type="FunFam" id="2.130.10.10:FF:000029">
    <property type="entry name" value="WD repeat-containing protein 5"/>
    <property type="match status" value="1"/>
</dbReference>
<dbReference type="Gene3D" id="2.130.10.10">
    <property type="entry name" value="YVTN repeat-like/Quinoprotein amine dehydrogenase"/>
    <property type="match status" value="1"/>
</dbReference>
<dbReference type="IDEAL" id="IID50144"/>
<dbReference type="InterPro" id="IPR020472">
    <property type="entry name" value="G-protein_beta_WD-40_rep"/>
</dbReference>
<dbReference type="InterPro" id="IPR015943">
    <property type="entry name" value="WD40/YVTN_repeat-like_dom_sf"/>
</dbReference>
<dbReference type="InterPro" id="IPR019775">
    <property type="entry name" value="WD40_repeat_CS"/>
</dbReference>
<dbReference type="InterPro" id="IPR036322">
    <property type="entry name" value="WD40_repeat_dom_sf"/>
</dbReference>
<dbReference type="InterPro" id="IPR001680">
    <property type="entry name" value="WD40_rpt"/>
</dbReference>
<dbReference type="PANTHER" id="PTHR22847:SF560">
    <property type="entry name" value="WD REPEAT-CONTAINING PROTEIN 5"/>
    <property type="match status" value="1"/>
</dbReference>
<dbReference type="PANTHER" id="PTHR22847">
    <property type="entry name" value="WD40 REPEAT PROTEIN"/>
    <property type="match status" value="1"/>
</dbReference>
<dbReference type="Pfam" id="PF25175">
    <property type="entry name" value="Beta-prop_WDR5"/>
    <property type="match status" value="1"/>
</dbReference>
<dbReference type="PIRSF" id="PIRSF002394">
    <property type="entry name" value="GN-bd_beta"/>
    <property type="match status" value="1"/>
</dbReference>
<dbReference type="PRINTS" id="PR00320">
    <property type="entry name" value="GPROTEINBRPT"/>
</dbReference>
<dbReference type="SMART" id="SM00320">
    <property type="entry name" value="WD40"/>
    <property type="match status" value="7"/>
</dbReference>
<dbReference type="SUPFAM" id="SSF50978">
    <property type="entry name" value="WD40 repeat-like"/>
    <property type="match status" value="1"/>
</dbReference>
<dbReference type="PROSITE" id="PS00678">
    <property type="entry name" value="WD_REPEATS_1"/>
    <property type="match status" value="4"/>
</dbReference>
<dbReference type="PROSITE" id="PS50082">
    <property type="entry name" value="WD_REPEATS_2"/>
    <property type="match status" value="6"/>
</dbReference>
<dbReference type="PROSITE" id="PS50294">
    <property type="entry name" value="WD_REPEATS_REGION"/>
    <property type="match status" value="1"/>
</dbReference>
<proteinExistence type="evidence at protein level"/>
<evidence type="ECO:0000250" key="1"/>
<evidence type="ECO:0000250" key="2">
    <source>
        <dbReference type="UniProtKB" id="P61964"/>
    </source>
</evidence>
<evidence type="ECO:0000250" key="3">
    <source>
        <dbReference type="UniProtKB" id="Q498M4"/>
    </source>
</evidence>
<evidence type="ECO:0000256" key="4">
    <source>
        <dbReference type="SAM" id="MobiDB-lite"/>
    </source>
</evidence>
<evidence type="ECO:0000269" key="5">
    <source>
    </source>
</evidence>
<evidence type="ECO:0000269" key="6">
    <source>
    </source>
</evidence>
<evidence type="ECO:0000269" key="7">
    <source>
    </source>
</evidence>
<evidence type="ECO:0000269" key="8">
    <source>
    </source>
</evidence>
<evidence type="ECO:0000269" key="9">
    <source>
    </source>
</evidence>
<evidence type="ECO:0000305" key="10"/>
<evidence type="ECO:0007829" key="11">
    <source>
        <dbReference type="PDB" id="2XL2"/>
    </source>
</evidence>
<organism>
    <name type="scientific">Mus musculus</name>
    <name type="common">Mouse</name>
    <dbReference type="NCBI Taxonomy" id="10090"/>
    <lineage>
        <taxon>Eukaryota</taxon>
        <taxon>Metazoa</taxon>
        <taxon>Chordata</taxon>
        <taxon>Craniata</taxon>
        <taxon>Vertebrata</taxon>
        <taxon>Euteleostomi</taxon>
        <taxon>Mammalia</taxon>
        <taxon>Eutheria</taxon>
        <taxon>Euarchontoglires</taxon>
        <taxon>Glires</taxon>
        <taxon>Rodentia</taxon>
        <taxon>Myomorpha</taxon>
        <taxon>Muroidea</taxon>
        <taxon>Muridae</taxon>
        <taxon>Murinae</taxon>
        <taxon>Mus</taxon>
        <taxon>Mus</taxon>
    </lineage>
</organism>
<gene>
    <name type="primary">Wdr5</name>
    <name type="synonym">Big</name>
    <name type="synonym">Big3</name>
</gene>
<feature type="initiator methionine" description="Removed" evidence="2">
    <location>
        <position position="1"/>
    </location>
</feature>
<feature type="chain" id="PRO_0000051351" description="WD repeat-containing protein 5">
    <location>
        <begin position="2"/>
        <end position="334"/>
    </location>
</feature>
<feature type="repeat" description="WD 1">
    <location>
        <begin position="43"/>
        <end position="82"/>
    </location>
</feature>
<feature type="repeat" description="WD 2">
    <location>
        <begin position="85"/>
        <end position="126"/>
    </location>
</feature>
<feature type="repeat" description="WD 3">
    <location>
        <begin position="128"/>
        <end position="168"/>
    </location>
</feature>
<feature type="repeat" description="WD 4">
    <location>
        <begin position="169"/>
        <end position="208"/>
    </location>
</feature>
<feature type="repeat" description="WD 5">
    <location>
        <begin position="212"/>
        <end position="253"/>
    </location>
</feature>
<feature type="repeat" description="WD 6">
    <location>
        <begin position="256"/>
        <end position="296"/>
    </location>
</feature>
<feature type="repeat" description="WD 7">
    <location>
        <begin position="299"/>
        <end position="333"/>
    </location>
</feature>
<feature type="region of interest" description="Disordered" evidence="4">
    <location>
        <begin position="1"/>
        <end position="31"/>
    </location>
</feature>
<feature type="compositionally biased region" description="Basic and acidic residues" evidence="4">
    <location>
        <begin position="1"/>
        <end position="12"/>
    </location>
</feature>
<feature type="compositionally biased region" description="Polar residues" evidence="4">
    <location>
        <begin position="17"/>
        <end position="28"/>
    </location>
</feature>
<feature type="site" description="Important for interaction with histone H3" evidence="1">
    <location>
        <position position="107"/>
    </location>
</feature>
<feature type="site" description="Important for interaction with histone H3" evidence="1">
    <location>
        <position position="133"/>
    </location>
</feature>
<feature type="site" description="Important for interaction with histone H3" evidence="1">
    <location>
        <position position="263"/>
    </location>
</feature>
<feature type="site" description="Important for interaction with histone H3" evidence="1">
    <location>
        <position position="322"/>
    </location>
</feature>
<feature type="modified residue" description="N-acetylalanine" evidence="2">
    <location>
        <position position="2"/>
    </location>
</feature>
<feature type="modified residue" description="N6-acetyllysine" evidence="2">
    <location>
        <position position="112"/>
    </location>
</feature>
<feature type="cross-link" description="Glycyl lysine isopeptide (Lys-Gly) (interchain with G-Cter in SUMO2)" evidence="2">
    <location>
        <position position="7"/>
    </location>
</feature>
<feature type="cross-link" description="Glycyl lysine isopeptide (Lys-Gly) (interchain with G-Cter in SUMO2)" evidence="2">
    <location>
        <position position="27"/>
    </location>
</feature>
<feature type="cross-link" description="Glycyl lysine isopeptide (Lys-Gly) (interchain with G-Cter in SUMO2)" evidence="2">
    <location>
        <position position="46"/>
    </location>
</feature>
<feature type="strand" evidence="11">
    <location>
        <begin position="36"/>
        <end position="41"/>
    </location>
</feature>
<feature type="strand" evidence="11">
    <location>
        <begin position="48"/>
        <end position="53"/>
    </location>
</feature>
<feature type="strand" evidence="11">
    <location>
        <begin position="57"/>
        <end position="64"/>
    </location>
</feature>
<feature type="strand" evidence="11">
    <location>
        <begin position="69"/>
        <end position="73"/>
    </location>
</feature>
<feature type="turn" evidence="11">
    <location>
        <begin position="74"/>
        <end position="76"/>
    </location>
</feature>
<feature type="strand" evidence="11">
    <location>
        <begin position="79"/>
        <end position="83"/>
    </location>
</feature>
<feature type="strand" evidence="11">
    <location>
        <begin position="90"/>
        <end position="95"/>
    </location>
</feature>
<feature type="strand" evidence="11">
    <location>
        <begin position="99"/>
        <end position="106"/>
    </location>
</feature>
<feature type="strand" evidence="11">
    <location>
        <begin position="109"/>
        <end position="115"/>
    </location>
</feature>
<feature type="turn" evidence="11">
    <location>
        <begin position="116"/>
        <end position="119"/>
    </location>
</feature>
<feature type="strand" evidence="11">
    <location>
        <begin position="120"/>
        <end position="126"/>
    </location>
</feature>
<feature type="strand" evidence="11">
    <location>
        <begin position="132"/>
        <end position="137"/>
    </location>
</feature>
<feature type="strand" evidence="11">
    <location>
        <begin position="142"/>
        <end position="148"/>
    </location>
</feature>
<feature type="strand" evidence="11">
    <location>
        <begin position="153"/>
        <end position="157"/>
    </location>
</feature>
<feature type="turn" evidence="11">
    <location>
        <begin position="158"/>
        <end position="160"/>
    </location>
</feature>
<feature type="strand" evidence="11">
    <location>
        <begin position="163"/>
        <end position="167"/>
    </location>
</feature>
<feature type="strand" evidence="11">
    <location>
        <begin position="174"/>
        <end position="179"/>
    </location>
</feature>
<feature type="strand" evidence="11">
    <location>
        <begin position="183"/>
        <end position="190"/>
    </location>
</feature>
<feature type="strand" evidence="11">
    <location>
        <begin position="195"/>
        <end position="199"/>
    </location>
</feature>
<feature type="turn" evidence="11">
    <location>
        <begin position="200"/>
        <end position="203"/>
    </location>
</feature>
<feature type="strand" evidence="11">
    <location>
        <begin position="204"/>
        <end position="209"/>
    </location>
</feature>
<feature type="strand" evidence="11">
    <location>
        <begin position="217"/>
        <end position="222"/>
    </location>
</feature>
<feature type="strand" evidence="11">
    <location>
        <begin position="226"/>
        <end position="233"/>
    </location>
</feature>
<feature type="turn" evidence="11">
    <location>
        <begin position="234"/>
        <end position="236"/>
    </location>
</feature>
<feature type="strand" evidence="11">
    <location>
        <begin position="237"/>
        <end position="242"/>
    </location>
</feature>
<feature type="turn" evidence="11">
    <location>
        <begin position="243"/>
        <end position="246"/>
    </location>
</feature>
<feature type="strand" evidence="11">
    <location>
        <begin position="247"/>
        <end position="252"/>
    </location>
</feature>
<feature type="strand" evidence="11">
    <location>
        <begin position="258"/>
        <end position="260"/>
    </location>
</feature>
<feature type="strand" evidence="11">
    <location>
        <begin position="264"/>
        <end position="267"/>
    </location>
</feature>
<feature type="strand" evidence="11">
    <location>
        <begin position="269"/>
        <end position="271"/>
    </location>
</feature>
<feature type="strand" evidence="11">
    <location>
        <begin position="273"/>
        <end position="276"/>
    </location>
</feature>
<feature type="strand" evidence="11">
    <location>
        <begin position="283"/>
        <end position="287"/>
    </location>
</feature>
<feature type="turn" evidence="11">
    <location>
        <begin position="288"/>
        <end position="290"/>
    </location>
</feature>
<feature type="strand" evidence="11">
    <location>
        <begin position="293"/>
        <end position="297"/>
    </location>
</feature>
<feature type="strand" evidence="11">
    <location>
        <begin position="304"/>
        <end position="309"/>
    </location>
</feature>
<feature type="strand" evidence="11">
    <location>
        <begin position="311"/>
        <end position="320"/>
    </location>
</feature>
<feature type="turn" evidence="11">
    <location>
        <begin position="322"/>
        <end position="324"/>
    </location>
</feature>
<feature type="strand" evidence="11">
    <location>
        <begin position="327"/>
        <end position="331"/>
    </location>
</feature>
<keyword id="KW-0002">3D-structure</keyword>
<keyword id="KW-0007">Acetylation</keyword>
<keyword id="KW-0156">Chromatin regulator</keyword>
<keyword id="KW-1017">Isopeptide bond</keyword>
<keyword id="KW-0539">Nucleus</keyword>
<keyword id="KW-1185">Reference proteome</keyword>
<keyword id="KW-0677">Repeat</keyword>
<keyword id="KW-0804">Transcription</keyword>
<keyword id="KW-0805">Transcription regulation</keyword>
<keyword id="KW-0832">Ubl conjugation</keyword>
<keyword id="KW-0853">WD repeat</keyword>
<name>WDR5_MOUSE</name>
<reference key="1">
    <citation type="journal article" date="2001" name="J. Biol. Chem.">
        <title>Cloning and characterization of a novel WD-40 repeat protein that dramatically accelerates osteoblastic differentiation.</title>
        <authorList>
            <person name="Gori F."/>
            <person name="Divieti P."/>
            <person name="Demay M.B."/>
        </authorList>
    </citation>
    <scope>NUCLEOTIDE SEQUENCE [MRNA]</scope>
    <scope>FUNCTION</scope>
    <source>
        <strain>C57BL/6J</strain>
    </source>
</reference>
<reference key="2">
    <citation type="journal article" date="2005" name="Science">
        <title>The transcriptional landscape of the mammalian genome.</title>
        <authorList>
            <person name="Carninci P."/>
            <person name="Kasukawa T."/>
            <person name="Katayama S."/>
            <person name="Gough J."/>
            <person name="Frith M.C."/>
            <person name="Maeda N."/>
            <person name="Oyama R."/>
            <person name="Ravasi T."/>
            <person name="Lenhard B."/>
            <person name="Wells C."/>
            <person name="Kodzius R."/>
            <person name="Shimokawa K."/>
            <person name="Bajic V.B."/>
            <person name="Brenner S.E."/>
            <person name="Batalov S."/>
            <person name="Forrest A.R."/>
            <person name="Zavolan M."/>
            <person name="Davis M.J."/>
            <person name="Wilming L.G."/>
            <person name="Aidinis V."/>
            <person name="Allen J.E."/>
            <person name="Ambesi-Impiombato A."/>
            <person name="Apweiler R."/>
            <person name="Aturaliya R.N."/>
            <person name="Bailey T.L."/>
            <person name="Bansal M."/>
            <person name="Baxter L."/>
            <person name="Beisel K.W."/>
            <person name="Bersano T."/>
            <person name="Bono H."/>
            <person name="Chalk A.M."/>
            <person name="Chiu K.P."/>
            <person name="Choudhary V."/>
            <person name="Christoffels A."/>
            <person name="Clutterbuck D.R."/>
            <person name="Crowe M.L."/>
            <person name="Dalla E."/>
            <person name="Dalrymple B.P."/>
            <person name="de Bono B."/>
            <person name="Della Gatta G."/>
            <person name="di Bernardo D."/>
            <person name="Down T."/>
            <person name="Engstrom P."/>
            <person name="Fagiolini M."/>
            <person name="Faulkner G."/>
            <person name="Fletcher C.F."/>
            <person name="Fukushima T."/>
            <person name="Furuno M."/>
            <person name="Futaki S."/>
            <person name="Gariboldi M."/>
            <person name="Georgii-Hemming P."/>
            <person name="Gingeras T.R."/>
            <person name="Gojobori T."/>
            <person name="Green R.E."/>
            <person name="Gustincich S."/>
            <person name="Harbers M."/>
            <person name="Hayashi Y."/>
            <person name="Hensch T.K."/>
            <person name="Hirokawa N."/>
            <person name="Hill D."/>
            <person name="Huminiecki L."/>
            <person name="Iacono M."/>
            <person name="Ikeo K."/>
            <person name="Iwama A."/>
            <person name="Ishikawa T."/>
            <person name="Jakt M."/>
            <person name="Kanapin A."/>
            <person name="Katoh M."/>
            <person name="Kawasawa Y."/>
            <person name="Kelso J."/>
            <person name="Kitamura H."/>
            <person name="Kitano H."/>
            <person name="Kollias G."/>
            <person name="Krishnan S.P."/>
            <person name="Kruger A."/>
            <person name="Kummerfeld S.K."/>
            <person name="Kurochkin I.V."/>
            <person name="Lareau L.F."/>
            <person name="Lazarevic D."/>
            <person name="Lipovich L."/>
            <person name="Liu J."/>
            <person name="Liuni S."/>
            <person name="McWilliam S."/>
            <person name="Madan Babu M."/>
            <person name="Madera M."/>
            <person name="Marchionni L."/>
            <person name="Matsuda H."/>
            <person name="Matsuzawa S."/>
            <person name="Miki H."/>
            <person name="Mignone F."/>
            <person name="Miyake S."/>
            <person name="Morris K."/>
            <person name="Mottagui-Tabar S."/>
            <person name="Mulder N."/>
            <person name="Nakano N."/>
            <person name="Nakauchi H."/>
            <person name="Ng P."/>
            <person name="Nilsson R."/>
            <person name="Nishiguchi S."/>
            <person name="Nishikawa S."/>
            <person name="Nori F."/>
            <person name="Ohara O."/>
            <person name="Okazaki Y."/>
            <person name="Orlando V."/>
            <person name="Pang K.C."/>
            <person name="Pavan W.J."/>
            <person name="Pavesi G."/>
            <person name="Pesole G."/>
            <person name="Petrovsky N."/>
            <person name="Piazza S."/>
            <person name="Reed J."/>
            <person name="Reid J.F."/>
            <person name="Ring B.Z."/>
            <person name="Ringwald M."/>
            <person name="Rost B."/>
            <person name="Ruan Y."/>
            <person name="Salzberg S.L."/>
            <person name="Sandelin A."/>
            <person name="Schneider C."/>
            <person name="Schoenbach C."/>
            <person name="Sekiguchi K."/>
            <person name="Semple C.A."/>
            <person name="Seno S."/>
            <person name="Sessa L."/>
            <person name="Sheng Y."/>
            <person name="Shibata Y."/>
            <person name="Shimada H."/>
            <person name="Shimada K."/>
            <person name="Silva D."/>
            <person name="Sinclair B."/>
            <person name="Sperling S."/>
            <person name="Stupka E."/>
            <person name="Sugiura K."/>
            <person name="Sultana R."/>
            <person name="Takenaka Y."/>
            <person name="Taki K."/>
            <person name="Tammoja K."/>
            <person name="Tan S.L."/>
            <person name="Tang S."/>
            <person name="Taylor M.S."/>
            <person name="Tegner J."/>
            <person name="Teichmann S.A."/>
            <person name="Ueda H.R."/>
            <person name="van Nimwegen E."/>
            <person name="Verardo R."/>
            <person name="Wei C.L."/>
            <person name="Yagi K."/>
            <person name="Yamanishi H."/>
            <person name="Zabarovsky E."/>
            <person name="Zhu S."/>
            <person name="Zimmer A."/>
            <person name="Hide W."/>
            <person name="Bult C."/>
            <person name="Grimmond S.M."/>
            <person name="Teasdale R.D."/>
            <person name="Liu E.T."/>
            <person name="Brusic V."/>
            <person name="Quackenbush J."/>
            <person name="Wahlestedt C."/>
            <person name="Mattick J.S."/>
            <person name="Hume D.A."/>
            <person name="Kai C."/>
            <person name="Sasaki D."/>
            <person name="Tomaru Y."/>
            <person name="Fukuda S."/>
            <person name="Kanamori-Katayama M."/>
            <person name="Suzuki M."/>
            <person name="Aoki J."/>
            <person name="Arakawa T."/>
            <person name="Iida J."/>
            <person name="Imamura K."/>
            <person name="Itoh M."/>
            <person name="Kato T."/>
            <person name="Kawaji H."/>
            <person name="Kawagashira N."/>
            <person name="Kawashima T."/>
            <person name="Kojima M."/>
            <person name="Kondo S."/>
            <person name="Konno H."/>
            <person name="Nakano K."/>
            <person name="Ninomiya N."/>
            <person name="Nishio T."/>
            <person name="Okada M."/>
            <person name="Plessy C."/>
            <person name="Shibata K."/>
            <person name="Shiraki T."/>
            <person name="Suzuki S."/>
            <person name="Tagami M."/>
            <person name="Waki K."/>
            <person name="Watahiki A."/>
            <person name="Okamura-Oho Y."/>
            <person name="Suzuki H."/>
            <person name="Kawai J."/>
            <person name="Hayashizaki Y."/>
        </authorList>
    </citation>
    <scope>NUCLEOTIDE SEQUENCE [LARGE SCALE MRNA]</scope>
    <source>
        <strain>C57BL/6J</strain>
        <tissue>Embryonic stem cell</tissue>
    </source>
</reference>
<reference key="3">
    <citation type="journal article" date="2004" name="Genome Res.">
        <title>The status, quality, and expansion of the NIH full-length cDNA project: the Mammalian Gene Collection (MGC).</title>
        <authorList>
            <consortium name="The MGC Project Team"/>
        </authorList>
    </citation>
    <scope>NUCLEOTIDE SEQUENCE [LARGE SCALE MRNA]</scope>
    <source>
        <strain>Czech II</strain>
        <strain>FVB/N</strain>
        <tissue>Liver</tissue>
        <tissue>Mammary tumor</tissue>
        <tissue>Salivary gland</tissue>
    </source>
</reference>
<reference key="4">
    <citation type="journal article" date="2005" name="Science">
        <title>PERIOD1-associated proteins modulate the negative limb of the mammalian circadian oscillator.</title>
        <authorList>
            <person name="Brown S.A."/>
            <person name="Ripperger J."/>
            <person name="Kadener S."/>
            <person name="Fleury-Olela F."/>
            <person name="Vilbois F."/>
            <person name="Rosbash M."/>
            <person name="Schibler U."/>
        </authorList>
    </citation>
    <scope>TISSUE SPECIFICITY</scope>
    <scope>SUBCELLULAR LOCATION</scope>
</reference>
<reference key="5">
    <citation type="journal article" date="2010" name="Cell">
        <title>A tissue-specific atlas of mouse protein phosphorylation and expression.</title>
        <authorList>
            <person name="Huttlin E.L."/>
            <person name="Jedrychowski M.P."/>
            <person name="Elias J.E."/>
            <person name="Goswami T."/>
            <person name="Rad R."/>
            <person name="Beausoleil S.A."/>
            <person name="Villen J."/>
            <person name="Haas W."/>
            <person name="Sowa M.E."/>
            <person name="Gygi S.P."/>
        </authorList>
    </citation>
    <scope>IDENTIFICATION BY MASS SPECTROMETRY [LARGE SCALE ANALYSIS]</scope>
    <source>
        <tissue>Brown adipose tissue</tissue>
        <tissue>Lung</tissue>
        <tissue>Spleen</tissue>
        <tissue>Testis</tissue>
    </source>
</reference>
<reference key="6">
    <citation type="journal article" date="2011" name="Cell">
        <title>Role for Dpy-30 in ES cell-fate specification by regulation of H3K4 methylation within bivalent domains.</title>
        <authorList>
            <person name="Jiang H."/>
            <person name="Shukla A."/>
            <person name="Wang X."/>
            <person name="Chen W.Y."/>
            <person name="Bernstein B.E."/>
            <person name="Roeder R.G."/>
        </authorList>
    </citation>
    <scope>IDENTIFICATION IN THE MLL COMPLEX</scope>
    <scope>INTERACTION WITH ASH2L; DPY30; KMT2A; KMT2D AND RBBP5</scope>
</reference>
<reference key="7">
    <citation type="journal article" date="2012" name="Cell">
        <title>Microcephaly gene links trithorax and REST/NRSF to control neural stem cell proliferation and differentiation.</title>
        <authorList>
            <person name="Yang Y.J."/>
            <person name="Baltus A.E."/>
            <person name="Mathew R.S."/>
            <person name="Murphy E.A."/>
            <person name="Evrony G.D."/>
            <person name="Gonzalez D.M."/>
            <person name="Wang E.P."/>
            <person name="Marshall-Walker C.A."/>
            <person name="Barry B.J."/>
            <person name="Murn J."/>
            <person name="Tatarakis A."/>
            <person name="Mahajan M.A."/>
            <person name="Samuels H.H."/>
            <person name="Shi Y."/>
            <person name="Golden J.A."/>
            <person name="Mahajnah M."/>
            <person name="Shenhav R."/>
            <person name="Walsh C.A."/>
        </authorList>
    </citation>
    <scope>INTERACTION WITH ZNF335</scope>
</reference>
<reference key="8">
    <citation type="journal article" date="2012" name="Cell Stem Cell">
        <title>Pax3/7BP is a Pax7- and Pax3-binding protein that regulates the proliferation of muscle precursor cells by an epigenetic mechanism.</title>
        <authorList>
            <person name="Diao Y."/>
            <person name="Guo X."/>
            <person name="Li Y."/>
            <person name="Sun K."/>
            <person name="Lu L."/>
            <person name="Jiang L."/>
            <person name="Fu X."/>
            <person name="Zhu H."/>
            <person name="Sun H."/>
            <person name="Wang H."/>
            <person name="Wu Z."/>
        </authorList>
    </citation>
    <scope>INTERACTION WITH PAXBP1</scope>
</reference>
<comment type="function">
    <text evidence="2 5">Contributes to histone modification (By similarity). May position the N-terminus of histone H3 for efficient trimethylation at 'Lys-4' (By similarity). As part of the MLL1/MLL complex it is involved in methylation and dimethylation at 'Lys-4' of histone H3 (By similarity). H3 'Lys-4' methylation represents a specific tag for epigenetic transcriptional activation (By similarity). As part of the NSL complex it may be involved in acetylation of nucleosomal histone H4 on several lysine residues (By similarity). May regulate osteoblasts differentiation (PubMed:11551928). In association with RBBP5 and ASH2L, stimulates the histone methyltransferase activities of KMT2A, KMT2B, KMT2C, KMT2D, SETD1A and SETD1B (By similarity).</text>
</comment>
<comment type="subunit">
    <text evidence="2 3 7 8 9">Interacts with PAXBP1; the interaction is direct and links a WDR5-containing histone methyltransferase complex to PAX7 and PAX3 (PubMed:22862948). Interacts with HCFC1 (By similarity). Component of the ATAC complex, a complex with histone acetyltransferase activity on histones H3 and H4 (By similarity). Component of the SET1 complex, at least composed of the catalytic subunit (SETD1A or SETD1B), WDR5, WDR82, RBBP5, ASH2L/ASH2, CXXC1/CFP1, HCFC1 and DPY30 (By similarity). Core component of several methyltransferase-containing complexes including MLL1/MLL, MLL2/3 (also named ASCOM complex) and MLL4/WBP7 (PubMed:21335234). Each complex is at least composed of ASH2L, RBBP5, WDR5, DPY30, one or more specific histone methyltransferases (KMT2A/MLL1, KMT2D/MLL2, KMT2C/MLL3 and KMT2B/MLL4), and the facultative components PAGR1, BACC1, CHD8, E2F6, HCFC1, HCFC2, HSP70, INO80C, KDM6A, KANSL1, LAS1L, MAX, MCRS1, MEN1, MGA, MYST1/MOF, NCOA6, PAXIP1/PTIP, PELP1, PHF20, PRP31, RING2, RUVB1/TIP49A, RUVB2/TIP49B, SENP3, TAF1, TAF4, TAF6, TAF7, TAF9, TEX10 and alpha- and beta-tubulin (PubMed:21335234). Component of the NSL complex at least composed of MOF/KAT8, KANSL1, KANSL2, KANSL3, MCRS1, PHF20, OGT1/OGT, WDR5 and HCFC1 (By similarity). Interacts with KMT2A/MLL1 (via WIN motif) and RBBP5; the interaction is direct (By similarity). Component ofthe ADA2A-containing complex (ATAC), composed of KAT14, KAT2A, TADA2L, TADA3L, ZZ3, MBIP, WDR5, YEATS2, CCDC101 and DR1 (By similarity). In the complex, it probably interacts directly with KAT2A, MBIP and KAT14 (By similarity). Interacts with histone H3 (By similarity). Interacts with SETD1A (via WIN motif) (By similarity). Component of a histone methylation complex composed of at least ZNF335, RBBP5, ASH2L and WDR5; the complex may have histone H3-specific methyltransferase activity, however does not have specificity for 'Lys-4' of histone H3 (By similarity). Interacts with ZNF335 (PubMed:23178126). Components of this complex may associate with components of the ZNF335-CCAR2-EMSY nuclear receptor-mediated transcription complex to form a complex at least composed of ZNF335, HCFC1, CCAR2, EMSY, MKI67, RBBP5, ASH2L and WDR5 (By similarity). Interacts with PER1 (By similarity). Interacts with KMT2D (via WIN motif) (PubMed:21335234). Interacts with KMT2B (via WIN motif), KMT2C (via WIN motif) and SETD1B (via WIN motif) (By similarity).</text>
</comment>
<comment type="interaction">
    <interactant intactId="EBI-1247084">
        <id>P61965</id>
    </interactant>
    <interactant intactId="EBI-1606219">
        <id>P20263</id>
        <label>Pou5f1</label>
    </interactant>
    <organismsDiffer>false</organismsDiffer>
    <experiments>7</experiments>
</comment>
<comment type="subcellular location">
    <subcellularLocation>
        <location evidence="6">Nucleus</location>
    </subcellularLocation>
</comment>
<comment type="tissue specificity">
    <text evidence="6">Expressed in liver (at protein level). Detected in brain, testis and kidney.</text>
</comment>
<comment type="similarity">
    <text evidence="10">Belongs to the WD repeat WDR5/wds family.</text>
</comment>
<accession>P61965</accession>
<accession>Q91VA5</accession>
<accession>Q922C9</accession>
<accession>Q9NWX7</accession>
<accession>Q9UGP9</accession>